<comment type="function">
    <text evidence="1">Joins adenosylcobinamide-GDP and alpha-ribazole to generate adenosylcobalamin (Ado-cobalamin). Also synthesizes adenosylcobalamin 5'-phosphate from adenosylcobinamide-GDP and alpha-ribazole 5'-phosphate.</text>
</comment>
<comment type="catalytic activity">
    <reaction evidence="1">
        <text>alpha-ribazole + adenosylcob(III)inamide-GDP = adenosylcob(III)alamin + GMP + H(+)</text>
        <dbReference type="Rhea" id="RHEA:16049"/>
        <dbReference type="ChEBI" id="CHEBI:10329"/>
        <dbReference type="ChEBI" id="CHEBI:15378"/>
        <dbReference type="ChEBI" id="CHEBI:18408"/>
        <dbReference type="ChEBI" id="CHEBI:58115"/>
        <dbReference type="ChEBI" id="CHEBI:60487"/>
        <dbReference type="EC" id="2.7.8.26"/>
    </reaction>
</comment>
<comment type="catalytic activity">
    <reaction evidence="1">
        <text>alpha-ribazole 5'-phosphate + adenosylcob(III)inamide-GDP = adenosylcob(III)alamin 5'-phosphate + GMP + H(+)</text>
        <dbReference type="Rhea" id="RHEA:23560"/>
        <dbReference type="ChEBI" id="CHEBI:15378"/>
        <dbReference type="ChEBI" id="CHEBI:57918"/>
        <dbReference type="ChEBI" id="CHEBI:58115"/>
        <dbReference type="ChEBI" id="CHEBI:60487"/>
        <dbReference type="ChEBI" id="CHEBI:60493"/>
        <dbReference type="EC" id="2.7.8.26"/>
    </reaction>
</comment>
<comment type="cofactor">
    <cofactor evidence="1">
        <name>Mg(2+)</name>
        <dbReference type="ChEBI" id="CHEBI:18420"/>
    </cofactor>
</comment>
<comment type="pathway">
    <text evidence="1">Cofactor biosynthesis; adenosylcobalamin biosynthesis; adenosylcobalamin from cob(II)yrinate a,c-diamide: step 7/7.</text>
</comment>
<comment type="subcellular location">
    <subcellularLocation>
        <location evidence="1">Cell membrane</location>
        <topology evidence="1">Multi-pass membrane protein</topology>
    </subcellularLocation>
</comment>
<comment type="similarity">
    <text evidence="1">Belongs to the CobS family.</text>
</comment>
<organism>
    <name type="scientific">Mycobacterium tuberculosis (strain ATCC 25177 / H37Ra)</name>
    <dbReference type="NCBI Taxonomy" id="419947"/>
    <lineage>
        <taxon>Bacteria</taxon>
        <taxon>Bacillati</taxon>
        <taxon>Actinomycetota</taxon>
        <taxon>Actinomycetes</taxon>
        <taxon>Mycobacteriales</taxon>
        <taxon>Mycobacteriaceae</taxon>
        <taxon>Mycobacterium</taxon>
        <taxon>Mycobacterium tuberculosis complex</taxon>
    </lineage>
</organism>
<name>COBS_MYCTA</name>
<dbReference type="EC" id="2.7.8.26" evidence="1"/>
<dbReference type="EMBL" id="CP000611">
    <property type="protein sequence ID" value="ABQ73986.1"/>
    <property type="molecule type" value="Genomic_DNA"/>
</dbReference>
<dbReference type="RefSeq" id="WP_003899217.1">
    <property type="nucleotide sequence ID" value="NZ_CP016972.1"/>
</dbReference>
<dbReference type="KEGG" id="mra:MRA_2224"/>
<dbReference type="eggNOG" id="COG0368">
    <property type="taxonomic scope" value="Bacteria"/>
</dbReference>
<dbReference type="HOGENOM" id="CLU_057426_0_2_11"/>
<dbReference type="UniPathway" id="UPA00148">
    <property type="reaction ID" value="UER00238"/>
</dbReference>
<dbReference type="Proteomes" id="UP000001988">
    <property type="component" value="Chromosome"/>
</dbReference>
<dbReference type="GO" id="GO:0005886">
    <property type="term" value="C:plasma membrane"/>
    <property type="evidence" value="ECO:0007669"/>
    <property type="project" value="UniProtKB-SubCell"/>
</dbReference>
<dbReference type="GO" id="GO:0051073">
    <property type="term" value="F:adenosylcobinamide-GDP ribazoletransferase activity"/>
    <property type="evidence" value="ECO:0007669"/>
    <property type="project" value="UniProtKB-UniRule"/>
</dbReference>
<dbReference type="GO" id="GO:0008818">
    <property type="term" value="F:cobalamin 5'-phosphate synthase activity"/>
    <property type="evidence" value="ECO:0007669"/>
    <property type="project" value="UniProtKB-UniRule"/>
</dbReference>
<dbReference type="GO" id="GO:0009236">
    <property type="term" value="P:cobalamin biosynthetic process"/>
    <property type="evidence" value="ECO:0007669"/>
    <property type="project" value="UniProtKB-UniRule"/>
</dbReference>
<dbReference type="HAMAP" id="MF_00719">
    <property type="entry name" value="CobS"/>
    <property type="match status" value="1"/>
</dbReference>
<dbReference type="InterPro" id="IPR003805">
    <property type="entry name" value="CobS"/>
</dbReference>
<dbReference type="NCBIfam" id="NF001279">
    <property type="entry name" value="PRK00235.2-1"/>
    <property type="match status" value="1"/>
</dbReference>
<dbReference type="PANTHER" id="PTHR34148">
    <property type="entry name" value="ADENOSYLCOBINAMIDE-GDP RIBAZOLETRANSFERASE"/>
    <property type="match status" value="1"/>
</dbReference>
<dbReference type="PANTHER" id="PTHR34148:SF1">
    <property type="entry name" value="ADENOSYLCOBINAMIDE-GDP RIBAZOLETRANSFERASE"/>
    <property type="match status" value="1"/>
</dbReference>
<dbReference type="Pfam" id="PF02654">
    <property type="entry name" value="CobS"/>
    <property type="match status" value="1"/>
</dbReference>
<gene>
    <name evidence="1" type="primary">cobS</name>
    <name type="ordered locus">MRA_2224</name>
</gene>
<sequence>MMRSLATAFAFATVIPTPGSATTPMGRGPMTALPVVGAALGALAAAIAWAGAQVFGPSSPLSGMLTVAVLLVVTRGLHIDGVADTADGLGCYGPPQRALAVMRDGSTGPFGVAAVVLVIALQGLAFATLTTVGIAGITLAVLSGRVTAVLVCRRLVPAAHGSTLGSRVAGTQPAPVVAAWLAVLLAVSVPAGPRPWQGPIAVLVAVTAGAALAAHCVHRFGGVTGDVLGSAIELSTTVSAVTLAGLARL</sequence>
<reference key="1">
    <citation type="journal article" date="2008" name="PLoS ONE">
        <title>Genetic basis of virulence attenuation revealed by comparative genomic analysis of Mycobacterium tuberculosis strain H37Ra versus H37Rv.</title>
        <authorList>
            <person name="Zheng H."/>
            <person name="Lu L."/>
            <person name="Wang B."/>
            <person name="Pu S."/>
            <person name="Zhang X."/>
            <person name="Zhu G."/>
            <person name="Shi W."/>
            <person name="Zhang L."/>
            <person name="Wang H."/>
            <person name="Wang S."/>
            <person name="Zhao G."/>
            <person name="Zhang Y."/>
        </authorList>
    </citation>
    <scope>NUCLEOTIDE SEQUENCE [LARGE SCALE GENOMIC DNA]</scope>
    <source>
        <strain>ATCC 25177 / H37Ra</strain>
    </source>
</reference>
<feature type="chain" id="PRO_1000045783" description="Adenosylcobinamide-GDP ribazoletransferase">
    <location>
        <begin position="1"/>
        <end position="249"/>
    </location>
</feature>
<feature type="transmembrane region" description="Helical" evidence="1">
    <location>
        <begin position="32"/>
        <end position="52"/>
    </location>
</feature>
<feature type="transmembrane region" description="Helical" evidence="1">
    <location>
        <begin position="109"/>
        <end position="129"/>
    </location>
</feature>
<feature type="transmembrane region" description="Helical" evidence="1">
    <location>
        <begin position="132"/>
        <end position="152"/>
    </location>
</feature>
<feature type="transmembrane region" description="Helical" evidence="1">
    <location>
        <begin position="173"/>
        <end position="193"/>
    </location>
</feature>
<feature type="transmembrane region" description="Helical" evidence="1">
    <location>
        <begin position="198"/>
        <end position="218"/>
    </location>
</feature>
<evidence type="ECO:0000255" key="1">
    <source>
        <dbReference type="HAMAP-Rule" id="MF_00719"/>
    </source>
</evidence>
<keyword id="KW-1003">Cell membrane</keyword>
<keyword id="KW-0169">Cobalamin biosynthesis</keyword>
<keyword id="KW-0460">Magnesium</keyword>
<keyword id="KW-0472">Membrane</keyword>
<keyword id="KW-1185">Reference proteome</keyword>
<keyword id="KW-0808">Transferase</keyword>
<keyword id="KW-0812">Transmembrane</keyword>
<keyword id="KW-1133">Transmembrane helix</keyword>
<accession>A5U4N6</accession>
<proteinExistence type="inferred from homology"/>
<protein>
    <recommendedName>
        <fullName evidence="1">Adenosylcobinamide-GDP ribazoletransferase</fullName>
        <ecNumber evidence="1">2.7.8.26</ecNumber>
    </recommendedName>
    <alternativeName>
        <fullName evidence="1">Cobalamin synthase</fullName>
    </alternativeName>
    <alternativeName>
        <fullName evidence="1">Cobalamin-5'-phosphate synthase</fullName>
    </alternativeName>
</protein>